<reference key="1">
    <citation type="submission" date="2007-06" db="EMBL/GenBank/DDBJ databases">
        <title>Complete sequence of chromosome of Staphylococcus aureus subsp. aureus JH1.</title>
        <authorList>
            <consortium name="US DOE Joint Genome Institute"/>
            <person name="Copeland A."/>
            <person name="Lucas S."/>
            <person name="Lapidus A."/>
            <person name="Barry K."/>
            <person name="Detter J.C."/>
            <person name="Glavina del Rio T."/>
            <person name="Hammon N."/>
            <person name="Israni S."/>
            <person name="Dalin E."/>
            <person name="Tice H."/>
            <person name="Pitluck S."/>
            <person name="Chain P."/>
            <person name="Malfatti S."/>
            <person name="Shin M."/>
            <person name="Vergez L."/>
            <person name="Schmutz J."/>
            <person name="Larimer F."/>
            <person name="Land M."/>
            <person name="Hauser L."/>
            <person name="Kyrpides N."/>
            <person name="Ivanova N."/>
            <person name="Tomasz A."/>
            <person name="Richardson P."/>
        </authorList>
    </citation>
    <scope>NUCLEOTIDE SEQUENCE [LARGE SCALE GENOMIC DNA]</scope>
    <source>
        <strain>JH1</strain>
    </source>
</reference>
<sequence>MEMAKEQELILVLDFGSQYNQLITRRIREMGVYSELHDHEISIEEIKKMNPKGIILSGGPNSVYEEGSFTIDPEIYNLGIPVLGICYGMQLTTKLLGGKVERANEREYGKAIINAKSDELFAGLPAEQTVWMSHSDKVIEIPEGFEVIADSPSTDYAAIEDKKRRIYGVQFHPEVRHTEYGNDLLNNFVRRVCDCKGQWTMENFIEIEIEKIRQRVGDRRVLCAMSGGVDSSVVAVLLHKAIGDQLTCIFVDHGLLRKGEGDMVMEQFGEGFNMNIIRVNAKDRFMNKLKGVSDPEQKRKIIGNEFVYVFDDEASKLKGVDFLAQGTLYTDVIESGTKTAQTIKSHHNVGGLPEDMEFELIEPINTLFKDEVRKLGIELGIPEHLVWRQPFPGPGLGIRVLGEITEDKLEIVRESDAILRQVIREEGLEREIWQYFTVLPNIQSVGVMGDYRTYDHTVGIRAVTSIDGMTSDFARIDWEVLQKISSRIVNEVDHVNRVVYDITSKPPSTIEWE</sequence>
<comment type="function">
    <text evidence="1">Catalyzes the synthesis of GMP from XMP.</text>
</comment>
<comment type="catalytic activity">
    <reaction evidence="1">
        <text>XMP + L-glutamine + ATP + H2O = GMP + L-glutamate + AMP + diphosphate + 2 H(+)</text>
        <dbReference type="Rhea" id="RHEA:11680"/>
        <dbReference type="ChEBI" id="CHEBI:15377"/>
        <dbReference type="ChEBI" id="CHEBI:15378"/>
        <dbReference type="ChEBI" id="CHEBI:29985"/>
        <dbReference type="ChEBI" id="CHEBI:30616"/>
        <dbReference type="ChEBI" id="CHEBI:33019"/>
        <dbReference type="ChEBI" id="CHEBI:57464"/>
        <dbReference type="ChEBI" id="CHEBI:58115"/>
        <dbReference type="ChEBI" id="CHEBI:58359"/>
        <dbReference type="ChEBI" id="CHEBI:456215"/>
        <dbReference type="EC" id="6.3.5.2"/>
    </reaction>
</comment>
<comment type="pathway">
    <text evidence="1">Purine metabolism; GMP biosynthesis; GMP from XMP (L-Gln route): step 1/1.</text>
</comment>
<comment type="subunit">
    <text evidence="1">Homodimer.</text>
</comment>
<evidence type="ECO:0000255" key="1">
    <source>
        <dbReference type="HAMAP-Rule" id="MF_00344"/>
    </source>
</evidence>
<organism>
    <name type="scientific">Staphylococcus aureus (strain JH1)</name>
    <dbReference type="NCBI Taxonomy" id="359787"/>
    <lineage>
        <taxon>Bacteria</taxon>
        <taxon>Bacillati</taxon>
        <taxon>Bacillota</taxon>
        <taxon>Bacilli</taxon>
        <taxon>Bacillales</taxon>
        <taxon>Staphylococcaceae</taxon>
        <taxon>Staphylococcus</taxon>
    </lineage>
</organism>
<gene>
    <name evidence="1" type="primary">guaA</name>
    <name type="ordered locus">SaurJH1_0449</name>
</gene>
<protein>
    <recommendedName>
        <fullName evidence="1">GMP synthase [glutamine-hydrolyzing]</fullName>
        <ecNumber evidence="1">6.3.5.2</ecNumber>
    </recommendedName>
    <alternativeName>
        <fullName evidence="1">GMP synthetase</fullName>
    </alternativeName>
    <alternativeName>
        <fullName evidence="1">Glutamine amidotransferase</fullName>
    </alternativeName>
</protein>
<keyword id="KW-0067">ATP-binding</keyword>
<keyword id="KW-0315">Glutamine amidotransferase</keyword>
<keyword id="KW-0332">GMP biosynthesis</keyword>
<keyword id="KW-0436">Ligase</keyword>
<keyword id="KW-0547">Nucleotide-binding</keyword>
<keyword id="KW-0658">Purine biosynthesis</keyword>
<feature type="chain" id="PRO_1000120420" description="GMP synthase [glutamine-hydrolyzing]">
    <location>
        <begin position="1"/>
        <end position="513"/>
    </location>
</feature>
<feature type="domain" description="Glutamine amidotransferase type-1" evidence="1">
    <location>
        <begin position="9"/>
        <end position="198"/>
    </location>
</feature>
<feature type="domain" description="GMPS ATP-PPase" evidence="1">
    <location>
        <begin position="199"/>
        <end position="388"/>
    </location>
</feature>
<feature type="active site" description="Nucleophile" evidence="1">
    <location>
        <position position="86"/>
    </location>
</feature>
<feature type="active site" evidence="1">
    <location>
        <position position="172"/>
    </location>
</feature>
<feature type="active site" evidence="1">
    <location>
        <position position="174"/>
    </location>
</feature>
<feature type="binding site" evidence="1">
    <location>
        <begin position="226"/>
        <end position="232"/>
    </location>
    <ligand>
        <name>ATP</name>
        <dbReference type="ChEBI" id="CHEBI:30616"/>
    </ligand>
</feature>
<dbReference type="EC" id="6.3.5.2" evidence="1"/>
<dbReference type="EMBL" id="CP000736">
    <property type="protein sequence ID" value="ABR51310.1"/>
    <property type="molecule type" value="Genomic_DNA"/>
</dbReference>
<dbReference type="SMR" id="A6TYP2"/>
<dbReference type="KEGG" id="sah:SaurJH1_0449"/>
<dbReference type="HOGENOM" id="CLU_014340_0_5_9"/>
<dbReference type="UniPathway" id="UPA00189">
    <property type="reaction ID" value="UER00296"/>
</dbReference>
<dbReference type="GO" id="GO:0005829">
    <property type="term" value="C:cytosol"/>
    <property type="evidence" value="ECO:0007669"/>
    <property type="project" value="TreeGrafter"/>
</dbReference>
<dbReference type="GO" id="GO:0005524">
    <property type="term" value="F:ATP binding"/>
    <property type="evidence" value="ECO:0007669"/>
    <property type="project" value="UniProtKB-UniRule"/>
</dbReference>
<dbReference type="GO" id="GO:0003921">
    <property type="term" value="F:GMP synthase activity"/>
    <property type="evidence" value="ECO:0007669"/>
    <property type="project" value="InterPro"/>
</dbReference>
<dbReference type="CDD" id="cd01742">
    <property type="entry name" value="GATase1_GMP_Synthase"/>
    <property type="match status" value="1"/>
</dbReference>
<dbReference type="CDD" id="cd01997">
    <property type="entry name" value="GMP_synthase_C"/>
    <property type="match status" value="1"/>
</dbReference>
<dbReference type="FunFam" id="3.30.300.10:FF:000002">
    <property type="entry name" value="GMP synthase [glutamine-hydrolyzing]"/>
    <property type="match status" value="1"/>
</dbReference>
<dbReference type="FunFam" id="3.40.50.620:FF:000001">
    <property type="entry name" value="GMP synthase [glutamine-hydrolyzing]"/>
    <property type="match status" value="1"/>
</dbReference>
<dbReference type="FunFam" id="3.40.50.880:FF:000001">
    <property type="entry name" value="GMP synthase [glutamine-hydrolyzing]"/>
    <property type="match status" value="1"/>
</dbReference>
<dbReference type="Gene3D" id="3.30.300.10">
    <property type="match status" value="1"/>
</dbReference>
<dbReference type="Gene3D" id="3.40.50.880">
    <property type="match status" value="1"/>
</dbReference>
<dbReference type="Gene3D" id="3.40.50.620">
    <property type="entry name" value="HUPs"/>
    <property type="match status" value="1"/>
</dbReference>
<dbReference type="HAMAP" id="MF_00344">
    <property type="entry name" value="GMP_synthase"/>
    <property type="match status" value="1"/>
</dbReference>
<dbReference type="InterPro" id="IPR029062">
    <property type="entry name" value="Class_I_gatase-like"/>
</dbReference>
<dbReference type="InterPro" id="IPR017926">
    <property type="entry name" value="GATASE"/>
</dbReference>
<dbReference type="InterPro" id="IPR001674">
    <property type="entry name" value="GMP_synth_C"/>
</dbReference>
<dbReference type="InterPro" id="IPR004739">
    <property type="entry name" value="GMP_synth_GATase"/>
</dbReference>
<dbReference type="InterPro" id="IPR022955">
    <property type="entry name" value="GMP_synthase"/>
</dbReference>
<dbReference type="InterPro" id="IPR025777">
    <property type="entry name" value="GMPS_ATP_PPase_dom"/>
</dbReference>
<dbReference type="InterPro" id="IPR014729">
    <property type="entry name" value="Rossmann-like_a/b/a_fold"/>
</dbReference>
<dbReference type="NCBIfam" id="TIGR00884">
    <property type="entry name" value="guaA_Cterm"/>
    <property type="match status" value="1"/>
</dbReference>
<dbReference type="NCBIfam" id="TIGR00888">
    <property type="entry name" value="guaA_Nterm"/>
    <property type="match status" value="1"/>
</dbReference>
<dbReference type="NCBIfam" id="NF000848">
    <property type="entry name" value="PRK00074.1"/>
    <property type="match status" value="1"/>
</dbReference>
<dbReference type="PANTHER" id="PTHR11922:SF2">
    <property type="entry name" value="GMP SYNTHASE [GLUTAMINE-HYDROLYZING]"/>
    <property type="match status" value="1"/>
</dbReference>
<dbReference type="PANTHER" id="PTHR11922">
    <property type="entry name" value="GMP SYNTHASE-RELATED"/>
    <property type="match status" value="1"/>
</dbReference>
<dbReference type="Pfam" id="PF00117">
    <property type="entry name" value="GATase"/>
    <property type="match status" value="1"/>
</dbReference>
<dbReference type="Pfam" id="PF00958">
    <property type="entry name" value="GMP_synt_C"/>
    <property type="match status" value="1"/>
</dbReference>
<dbReference type="Pfam" id="PF03054">
    <property type="entry name" value="tRNA_Me_trans"/>
    <property type="match status" value="1"/>
</dbReference>
<dbReference type="PRINTS" id="PR00097">
    <property type="entry name" value="ANTSNTHASEII"/>
</dbReference>
<dbReference type="PRINTS" id="PR00099">
    <property type="entry name" value="CPSGATASE"/>
</dbReference>
<dbReference type="PRINTS" id="PR00096">
    <property type="entry name" value="GATASE"/>
</dbReference>
<dbReference type="SUPFAM" id="SSF52402">
    <property type="entry name" value="Adenine nucleotide alpha hydrolases-like"/>
    <property type="match status" value="1"/>
</dbReference>
<dbReference type="SUPFAM" id="SSF52317">
    <property type="entry name" value="Class I glutamine amidotransferase-like"/>
    <property type="match status" value="1"/>
</dbReference>
<dbReference type="SUPFAM" id="SSF54810">
    <property type="entry name" value="GMP synthetase C-terminal dimerisation domain"/>
    <property type="match status" value="1"/>
</dbReference>
<dbReference type="PROSITE" id="PS51273">
    <property type="entry name" value="GATASE_TYPE_1"/>
    <property type="match status" value="1"/>
</dbReference>
<dbReference type="PROSITE" id="PS51553">
    <property type="entry name" value="GMPS_ATP_PPASE"/>
    <property type="match status" value="1"/>
</dbReference>
<accession>A6TYP2</accession>
<proteinExistence type="inferred from homology"/>
<name>GUAA_STAA2</name>